<keyword id="KW-0378">Hydrolase</keyword>
<proteinExistence type="inferred from homology"/>
<dbReference type="EC" id="3.6.1.-" evidence="1"/>
<dbReference type="EMBL" id="AE017223">
    <property type="protein sequence ID" value="AAX75130.1"/>
    <property type="molecule type" value="Genomic_DNA"/>
</dbReference>
<dbReference type="RefSeq" id="WP_002964914.1">
    <property type="nucleotide sequence ID" value="NC_006932.1"/>
</dbReference>
<dbReference type="SMR" id="Q57B54"/>
<dbReference type="EnsemblBacteria" id="AAX75130">
    <property type="protein sequence ID" value="AAX75130"/>
    <property type="gene ID" value="BruAb1_1815"/>
</dbReference>
<dbReference type="KEGG" id="bmb:BruAb1_1815"/>
<dbReference type="HOGENOM" id="CLU_087195_3_0_5"/>
<dbReference type="Proteomes" id="UP000000540">
    <property type="component" value="Chromosome I"/>
</dbReference>
<dbReference type="GO" id="GO:0034432">
    <property type="term" value="F:bis(5'-adenosyl)-pentaphosphatase activity"/>
    <property type="evidence" value="ECO:0007669"/>
    <property type="project" value="TreeGrafter"/>
</dbReference>
<dbReference type="GO" id="GO:0008893">
    <property type="term" value="F:guanosine-3',5'-bis(diphosphate) 3'-diphosphatase activity"/>
    <property type="evidence" value="ECO:0007669"/>
    <property type="project" value="TreeGrafter"/>
</dbReference>
<dbReference type="GO" id="GO:0006753">
    <property type="term" value="P:nucleoside phosphate metabolic process"/>
    <property type="evidence" value="ECO:0007669"/>
    <property type="project" value="TreeGrafter"/>
</dbReference>
<dbReference type="GO" id="GO:0019693">
    <property type="term" value="P:ribose phosphate metabolic process"/>
    <property type="evidence" value="ECO:0007669"/>
    <property type="project" value="TreeGrafter"/>
</dbReference>
<dbReference type="CDD" id="cd03671">
    <property type="entry name" value="NUDIX_Ap4A_hydrolase_plant_like"/>
    <property type="match status" value="1"/>
</dbReference>
<dbReference type="Gene3D" id="3.90.79.10">
    <property type="entry name" value="Nucleoside Triphosphate Pyrophosphohydrolase"/>
    <property type="match status" value="1"/>
</dbReference>
<dbReference type="HAMAP" id="MF_00298">
    <property type="entry name" value="Nudix_RppH"/>
    <property type="match status" value="1"/>
</dbReference>
<dbReference type="InterPro" id="IPR020476">
    <property type="entry name" value="Nudix_hydrolase"/>
</dbReference>
<dbReference type="InterPro" id="IPR015797">
    <property type="entry name" value="NUDIX_hydrolase-like_dom_sf"/>
</dbReference>
<dbReference type="InterPro" id="IPR020084">
    <property type="entry name" value="NUDIX_hydrolase_CS"/>
</dbReference>
<dbReference type="InterPro" id="IPR000086">
    <property type="entry name" value="NUDIX_hydrolase_dom"/>
</dbReference>
<dbReference type="InterPro" id="IPR022927">
    <property type="entry name" value="RppH"/>
</dbReference>
<dbReference type="NCBIfam" id="NF001938">
    <property type="entry name" value="PRK00714.1-5"/>
    <property type="match status" value="1"/>
</dbReference>
<dbReference type="PANTHER" id="PTHR11839:SF22">
    <property type="entry name" value="NUDIX HYDROLASE 26, CHLOROPLASTIC"/>
    <property type="match status" value="1"/>
</dbReference>
<dbReference type="PANTHER" id="PTHR11839">
    <property type="entry name" value="UDP/ADP-SUGAR PYROPHOSPHATASE"/>
    <property type="match status" value="1"/>
</dbReference>
<dbReference type="Pfam" id="PF00293">
    <property type="entry name" value="NUDIX"/>
    <property type="match status" value="1"/>
</dbReference>
<dbReference type="PRINTS" id="PR00502">
    <property type="entry name" value="NUDIXFAMILY"/>
</dbReference>
<dbReference type="SUPFAM" id="SSF55811">
    <property type="entry name" value="Nudix"/>
    <property type="match status" value="1"/>
</dbReference>
<dbReference type="PROSITE" id="PS51462">
    <property type="entry name" value="NUDIX"/>
    <property type="match status" value="1"/>
</dbReference>
<dbReference type="PROSITE" id="PS00893">
    <property type="entry name" value="NUDIX_BOX"/>
    <property type="match status" value="1"/>
</dbReference>
<name>RPPH_BRUAB</name>
<protein>
    <recommendedName>
        <fullName evidence="1">RNA pyrophosphohydrolase</fullName>
        <ecNumber evidence="1">3.6.1.-</ecNumber>
    </recommendedName>
    <alternativeName>
        <fullName evidence="1">(Di)nucleoside polyphosphate hydrolase</fullName>
    </alternativeName>
</protein>
<comment type="function">
    <text evidence="1">Accelerates the degradation of transcripts by removing pyrophosphate from the 5'-end of triphosphorylated RNA, leading to a more labile monophosphorylated state that can stimulate subsequent ribonuclease cleavage.</text>
</comment>
<comment type="cofactor">
    <cofactor evidence="1">
        <name>a divalent metal cation</name>
        <dbReference type="ChEBI" id="CHEBI:60240"/>
    </cofactor>
</comment>
<comment type="similarity">
    <text evidence="1">Belongs to the Nudix hydrolase family. RppH subfamily.</text>
</comment>
<accession>Q57B54</accession>
<evidence type="ECO:0000255" key="1">
    <source>
        <dbReference type="HAMAP-Rule" id="MF_00298"/>
    </source>
</evidence>
<organism>
    <name type="scientific">Brucella abortus biovar 1 (strain 9-941)</name>
    <dbReference type="NCBI Taxonomy" id="262698"/>
    <lineage>
        <taxon>Bacteria</taxon>
        <taxon>Pseudomonadati</taxon>
        <taxon>Pseudomonadota</taxon>
        <taxon>Alphaproteobacteria</taxon>
        <taxon>Hyphomicrobiales</taxon>
        <taxon>Brucellaceae</taxon>
        <taxon>Brucella/Ochrobactrum group</taxon>
        <taxon>Brucella</taxon>
    </lineage>
</organism>
<feature type="chain" id="PRO_0000231899" description="RNA pyrophosphohydrolase">
    <location>
        <begin position="1"/>
        <end position="178"/>
    </location>
</feature>
<feature type="domain" description="Nudix hydrolase" evidence="1">
    <location>
        <begin position="18"/>
        <end position="171"/>
    </location>
</feature>
<feature type="short sequence motif" description="Nudix box">
    <location>
        <begin position="59"/>
        <end position="80"/>
    </location>
</feature>
<reference key="1">
    <citation type="journal article" date="2005" name="J. Bacteriol.">
        <title>Completion of the genome sequence of Brucella abortus and comparison to the highly similar genomes of Brucella melitensis and Brucella suis.</title>
        <authorList>
            <person name="Halling S.M."/>
            <person name="Peterson-Burch B.D."/>
            <person name="Bricker B.J."/>
            <person name="Zuerner R.L."/>
            <person name="Qing Z."/>
            <person name="Li L.-L."/>
            <person name="Kapur V."/>
            <person name="Alt D.P."/>
            <person name="Olsen S.C."/>
        </authorList>
    </citation>
    <scope>NUCLEOTIDE SEQUENCE [LARGE SCALE GENOMIC DNA]</scope>
    <source>
        <strain>9-941</strain>
    </source>
</reference>
<sequence>MSEHKGPTGAMVDPESLPYRPCVGLMVLNKAGLVWAGRRIVIPGDEMDGATQLWQMPQGGIDKGEDPAQAALRELYEETGMTSVSLLEEASDWINYDLPPHLMGLALKGKYRGQTQKWFAYRFEGDESEIAINPPPGGHTAEFDCWEWKPMADLPNLIVPFKRKVYEQVVATFRHLAA</sequence>
<gene>
    <name evidence="1" type="primary">rppH</name>
    <name evidence="1" type="synonym">nudH</name>
    <name type="ordered locus">BruAb1_1815</name>
</gene>